<gene>
    <name evidence="1" type="primary">hutI</name>
    <name type="ordered locus">VP1276</name>
</gene>
<organism>
    <name type="scientific">Vibrio parahaemolyticus serotype O3:K6 (strain RIMD 2210633)</name>
    <dbReference type="NCBI Taxonomy" id="223926"/>
    <lineage>
        <taxon>Bacteria</taxon>
        <taxon>Pseudomonadati</taxon>
        <taxon>Pseudomonadota</taxon>
        <taxon>Gammaproteobacteria</taxon>
        <taxon>Vibrionales</taxon>
        <taxon>Vibrionaceae</taxon>
        <taxon>Vibrio</taxon>
    </lineage>
</organism>
<dbReference type="EC" id="3.5.2.7" evidence="1"/>
<dbReference type="EMBL" id="BA000031">
    <property type="protein sequence ID" value="BAC59539.1"/>
    <property type="molecule type" value="Genomic_DNA"/>
</dbReference>
<dbReference type="RefSeq" id="NP_797655.1">
    <property type="nucleotide sequence ID" value="NC_004603.1"/>
</dbReference>
<dbReference type="RefSeq" id="WP_005483557.1">
    <property type="nucleotide sequence ID" value="NC_004603.1"/>
</dbReference>
<dbReference type="SMR" id="Q87Q74"/>
<dbReference type="GeneID" id="1188781"/>
<dbReference type="KEGG" id="vpa:VP1276"/>
<dbReference type="PATRIC" id="fig|223926.6.peg.1216"/>
<dbReference type="eggNOG" id="COG1228">
    <property type="taxonomic scope" value="Bacteria"/>
</dbReference>
<dbReference type="HOGENOM" id="CLU_041647_0_0_6"/>
<dbReference type="UniPathway" id="UPA00379">
    <property type="reaction ID" value="UER00551"/>
</dbReference>
<dbReference type="Proteomes" id="UP000002493">
    <property type="component" value="Chromosome 1"/>
</dbReference>
<dbReference type="GO" id="GO:0005737">
    <property type="term" value="C:cytoplasm"/>
    <property type="evidence" value="ECO:0007669"/>
    <property type="project" value="UniProtKB-SubCell"/>
</dbReference>
<dbReference type="GO" id="GO:0050480">
    <property type="term" value="F:imidazolonepropionase activity"/>
    <property type="evidence" value="ECO:0007669"/>
    <property type="project" value="UniProtKB-UniRule"/>
</dbReference>
<dbReference type="GO" id="GO:0005506">
    <property type="term" value="F:iron ion binding"/>
    <property type="evidence" value="ECO:0007669"/>
    <property type="project" value="UniProtKB-UniRule"/>
</dbReference>
<dbReference type="GO" id="GO:0008270">
    <property type="term" value="F:zinc ion binding"/>
    <property type="evidence" value="ECO:0007669"/>
    <property type="project" value="UniProtKB-UniRule"/>
</dbReference>
<dbReference type="GO" id="GO:0019556">
    <property type="term" value="P:L-histidine catabolic process to glutamate and formamide"/>
    <property type="evidence" value="ECO:0007669"/>
    <property type="project" value="UniProtKB-UniPathway"/>
</dbReference>
<dbReference type="GO" id="GO:0019557">
    <property type="term" value="P:L-histidine catabolic process to glutamate and formate"/>
    <property type="evidence" value="ECO:0007669"/>
    <property type="project" value="UniProtKB-UniPathway"/>
</dbReference>
<dbReference type="CDD" id="cd01296">
    <property type="entry name" value="Imidazolone-5PH"/>
    <property type="match status" value="1"/>
</dbReference>
<dbReference type="FunFam" id="3.20.20.140:FF:000007">
    <property type="entry name" value="Imidazolonepropionase"/>
    <property type="match status" value="1"/>
</dbReference>
<dbReference type="Gene3D" id="3.20.20.140">
    <property type="entry name" value="Metal-dependent hydrolases"/>
    <property type="match status" value="1"/>
</dbReference>
<dbReference type="Gene3D" id="2.30.40.10">
    <property type="entry name" value="Urease, subunit C, domain 1"/>
    <property type="match status" value="1"/>
</dbReference>
<dbReference type="HAMAP" id="MF_00372">
    <property type="entry name" value="HutI"/>
    <property type="match status" value="1"/>
</dbReference>
<dbReference type="InterPro" id="IPR006680">
    <property type="entry name" value="Amidohydro-rel"/>
</dbReference>
<dbReference type="InterPro" id="IPR005920">
    <property type="entry name" value="HutI"/>
</dbReference>
<dbReference type="InterPro" id="IPR011059">
    <property type="entry name" value="Metal-dep_hydrolase_composite"/>
</dbReference>
<dbReference type="InterPro" id="IPR032466">
    <property type="entry name" value="Metal_Hydrolase"/>
</dbReference>
<dbReference type="NCBIfam" id="TIGR01224">
    <property type="entry name" value="hutI"/>
    <property type="match status" value="1"/>
</dbReference>
<dbReference type="PANTHER" id="PTHR42752">
    <property type="entry name" value="IMIDAZOLONEPROPIONASE"/>
    <property type="match status" value="1"/>
</dbReference>
<dbReference type="PANTHER" id="PTHR42752:SF1">
    <property type="entry name" value="IMIDAZOLONEPROPIONASE-RELATED"/>
    <property type="match status" value="1"/>
</dbReference>
<dbReference type="Pfam" id="PF01979">
    <property type="entry name" value="Amidohydro_1"/>
    <property type="match status" value="1"/>
</dbReference>
<dbReference type="SUPFAM" id="SSF51338">
    <property type="entry name" value="Composite domain of metallo-dependent hydrolases"/>
    <property type="match status" value="1"/>
</dbReference>
<dbReference type="SUPFAM" id="SSF51556">
    <property type="entry name" value="Metallo-dependent hydrolases"/>
    <property type="match status" value="1"/>
</dbReference>
<name>HUTI_VIBPA</name>
<sequence length="416" mass="45185">MDLLIENARLVSMERGEAGYLPTPPARVGIQAGKIAAISAHPVGRDTPQIEALLSPQHYSQTIDLQGQLLTPGLIDCHTHLIYAGNRANEFEMRLNGVPYQEIAKQGGGILSSVKATRAATEEQLIELALPRLDGLLASGVTSVEVKSGYGLTLKDELKMLRAAKALEQERNVKITTTLLAAHALPPEFEGRADDYIEHVCQEIIPIVAEENLATSVDVFCESIGFNLEQTEKVFATAKLYGLHVKGHTEQLSNLGGTELTARYKGLSADHIEYLDEDGVVALSKSDTVATLLPGAFYFLRETQLPPIELLRKYHVPMAIATDVNPGTSPFSDLTLMMNMACTLFRLTPQEALRGVTQHAATALGYTNSRGVIKTGFDADLAIWDIEHPADLSYQVGAKRLVGRIVNGEYVSHGGF</sequence>
<evidence type="ECO:0000255" key="1">
    <source>
        <dbReference type="HAMAP-Rule" id="MF_00372"/>
    </source>
</evidence>
<proteinExistence type="inferred from homology"/>
<feature type="chain" id="PRO_0000160972" description="Imidazolonepropionase">
    <location>
        <begin position="1"/>
        <end position="416"/>
    </location>
</feature>
<feature type="binding site" evidence="1">
    <location>
        <position position="78"/>
    </location>
    <ligand>
        <name>Fe(3+)</name>
        <dbReference type="ChEBI" id="CHEBI:29034"/>
    </ligand>
</feature>
<feature type="binding site" evidence="1">
    <location>
        <position position="78"/>
    </location>
    <ligand>
        <name>Zn(2+)</name>
        <dbReference type="ChEBI" id="CHEBI:29105"/>
    </ligand>
</feature>
<feature type="binding site" evidence="1">
    <location>
        <position position="80"/>
    </location>
    <ligand>
        <name>Fe(3+)</name>
        <dbReference type="ChEBI" id="CHEBI:29034"/>
    </ligand>
</feature>
<feature type="binding site" evidence="1">
    <location>
        <position position="80"/>
    </location>
    <ligand>
        <name>Zn(2+)</name>
        <dbReference type="ChEBI" id="CHEBI:29105"/>
    </ligand>
</feature>
<feature type="binding site" evidence="1">
    <location>
        <position position="87"/>
    </location>
    <ligand>
        <name>4-imidazolone-5-propanoate</name>
        <dbReference type="ChEBI" id="CHEBI:77893"/>
    </ligand>
</feature>
<feature type="binding site" evidence="1">
    <location>
        <position position="150"/>
    </location>
    <ligand>
        <name>4-imidazolone-5-propanoate</name>
        <dbReference type="ChEBI" id="CHEBI:77893"/>
    </ligand>
</feature>
<feature type="binding site" evidence="1">
    <location>
        <position position="150"/>
    </location>
    <ligand>
        <name>N-formimidoyl-L-glutamate</name>
        <dbReference type="ChEBI" id="CHEBI:58928"/>
    </ligand>
</feature>
<feature type="binding site" evidence="1">
    <location>
        <position position="183"/>
    </location>
    <ligand>
        <name>4-imidazolone-5-propanoate</name>
        <dbReference type="ChEBI" id="CHEBI:77893"/>
    </ligand>
</feature>
<feature type="binding site" evidence="1">
    <location>
        <position position="248"/>
    </location>
    <ligand>
        <name>Fe(3+)</name>
        <dbReference type="ChEBI" id="CHEBI:29034"/>
    </ligand>
</feature>
<feature type="binding site" evidence="1">
    <location>
        <position position="248"/>
    </location>
    <ligand>
        <name>Zn(2+)</name>
        <dbReference type="ChEBI" id="CHEBI:29105"/>
    </ligand>
</feature>
<feature type="binding site" evidence="1">
    <location>
        <position position="251"/>
    </location>
    <ligand>
        <name>4-imidazolone-5-propanoate</name>
        <dbReference type="ChEBI" id="CHEBI:77893"/>
    </ligand>
</feature>
<feature type="binding site" evidence="1">
    <location>
        <position position="323"/>
    </location>
    <ligand>
        <name>Fe(3+)</name>
        <dbReference type="ChEBI" id="CHEBI:29034"/>
    </ligand>
</feature>
<feature type="binding site" evidence="1">
    <location>
        <position position="323"/>
    </location>
    <ligand>
        <name>Zn(2+)</name>
        <dbReference type="ChEBI" id="CHEBI:29105"/>
    </ligand>
</feature>
<feature type="binding site" evidence="1">
    <location>
        <position position="325"/>
    </location>
    <ligand>
        <name>N-formimidoyl-L-glutamate</name>
        <dbReference type="ChEBI" id="CHEBI:58928"/>
    </ligand>
</feature>
<feature type="binding site" evidence="1">
    <location>
        <position position="327"/>
    </location>
    <ligand>
        <name>N-formimidoyl-L-glutamate</name>
        <dbReference type="ChEBI" id="CHEBI:58928"/>
    </ligand>
</feature>
<feature type="binding site" evidence="1">
    <location>
        <position position="328"/>
    </location>
    <ligand>
        <name>4-imidazolone-5-propanoate</name>
        <dbReference type="ChEBI" id="CHEBI:77893"/>
    </ligand>
</feature>
<reference key="1">
    <citation type="journal article" date="2003" name="Lancet">
        <title>Genome sequence of Vibrio parahaemolyticus: a pathogenic mechanism distinct from that of V. cholerae.</title>
        <authorList>
            <person name="Makino K."/>
            <person name="Oshima K."/>
            <person name="Kurokawa K."/>
            <person name="Yokoyama K."/>
            <person name="Uda T."/>
            <person name="Tagomori K."/>
            <person name="Iijima Y."/>
            <person name="Najima M."/>
            <person name="Nakano M."/>
            <person name="Yamashita A."/>
            <person name="Kubota Y."/>
            <person name="Kimura S."/>
            <person name="Yasunaga T."/>
            <person name="Honda T."/>
            <person name="Shinagawa H."/>
            <person name="Hattori M."/>
            <person name="Iida T."/>
        </authorList>
    </citation>
    <scope>NUCLEOTIDE SEQUENCE [LARGE SCALE GENOMIC DNA]</scope>
    <source>
        <strain>RIMD 2210633</strain>
    </source>
</reference>
<protein>
    <recommendedName>
        <fullName evidence="1">Imidazolonepropionase</fullName>
        <ecNumber evidence="1">3.5.2.7</ecNumber>
    </recommendedName>
    <alternativeName>
        <fullName evidence="1">Imidazolone-5-propionate hydrolase</fullName>
    </alternativeName>
</protein>
<accession>Q87Q74</accession>
<keyword id="KW-0963">Cytoplasm</keyword>
<keyword id="KW-0369">Histidine metabolism</keyword>
<keyword id="KW-0378">Hydrolase</keyword>
<keyword id="KW-0408">Iron</keyword>
<keyword id="KW-0479">Metal-binding</keyword>
<keyword id="KW-0862">Zinc</keyword>
<comment type="function">
    <text evidence="1">Catalyzes the hydrolytic cleavage of the carbon-nitrogen bond in imidazolone-5-propanoate to yield N-formimidoyl-L-glutamate. It is the third step in the universal histidine degradation pathway.</text>
</comment>
<comment type="catalytic activity">
    <reaction evidence="1">
        <text>4-imidazolone-5-propanoate + H2O = N-formimidoyl-L-glutamate</text>
        <dbReference type="Rhea" id="RHEA:23660"/>
        <dbReference type="ChEBI" id="CHEBI:15377"/>
        <dbReference type="ChEBI" id="CHEBI:58928"/>
        <dbReference type="ChEBI" id="CHEBI:77893"/>
        <dbReference type="EC" id="3.5.2.7"/>
    </reaction>
</comment>
<comment type="cofactor">
    <cofactor evidence="1">
        <name>Zn(2+)</name>
        <dbReference type="ChEBI" id="CHEBI:29105"/>
    </cofactor>
    <cofactor evidence="1">
        <name>Fe(3+)</name>
        <dbReference type="ChEBI" id="CHEBI:29034"/>
    </cofactor>
    <text evidence="1">Binds 1 zinc or iron ion per subunit.</text>
</comment>
<comment type="pathway">
    <text evidence="1">Amino-acid degradation; L-histidine degradation into L-glutamate; N-formimidoyl-L-glutamate from L-histidine: step 3/3.</text>
</comment>
<comment type="subcellular location">
    <subcellularLocation>
        <location evidence="1">Cytoplasm</location>
    </subcellularLocation>
</comment>
<comment type="similarity">
    <text evidence="1">Belongs to the metallo-dependent hydrolases superfamily. HutI family.</text>
</comment>